<gene>
    <name evidence="1" type="primary">frdC</name>
    <name type="ordered locus">SF4310</name>
    <name type="ordered locus">S4575</name>
</gene>
<organism>
    <name type="scientific">Shigella flexneri</name>
    <dbReference type="NCBI Taxonomy" id="623"/>
    <lineage>
        <taxon>Bacteria</taxon>
        <taxon>Pseudomonadati</taxon>
        <taxon>Pseudomonadota</taxon>
        <taxon>Gammaproteobacteria</taxon>
        <taxon>Enterobacterales</taxon>
        <taxon>Enterobacteriaceae</taxon>
        <taxon>Shigella</taxon>
    </lineage>
</organism>
<reference key="1">
    <citation type="journal article" date="2002" name="Nucleic Acids Res.">
        <title>Genome sequence of Shigella flexneri 2a: insights into pathogenicity through comparison with genomes of Escherichia coli K12 and O157.</title>
        <authorList>
            <person name="Jin Q."/>
            <person name="Yuan Z."/>
            <person name="Xu J."/>
            <person name="Wang Y."/>
            <person name="Shen Y."/>
            <person name="Lu W."/>
            <person name="Wang J."/>
            <person name="Liu H."/>
            <person name="Yang J."/>
            <person name="Yang F."/>
            <person name="Zhang X."/>
            <person name="Zhang J."/>
            <person name="Yang G."/>
            <person name="Wu H."/>
            <person name="Qu D."/>
            <person name="Dong J."/>
            <person name="Sun L."/>
            <person name="Xue Y."/>
            <person name="Zhao A."/>
            <person name="Gao Y."/>
            <person name="Zhu J."/>
            <person name="Kan B."/>
            <person name="Ding K."/>
            <person name="Chen S."/>
            <person name="Cheng H."/>
            <person name="Yao Z."/>
            <person name="He B."/>
            <person name="Chen R."/>
            <person name="Ma D."/>
            <person name="Qiang B."/>
            <person name="Wen Y."/>
            <person name="Hou Y."/>
            <person name="Yu J."/>
        </authorList>
    </citation>
    <scope>NUCLEOTIDE SEQUENCE [LARGE SCALE GENOMIC DNA]</scope>
    <source>
        <strain>301 / Serotype 2a</strain>
    </source>
</reference>
<reference key="2">
    <citation type="journal article" date="2003" name="Infect. Immun.">
        <title>Complete genome sequence and comparative genomics of Shigella flexneri serotype 2a strain 2457T.</title>
        <authorList>
            <person name="Wei J."/>
            <person name="Goldberg M.B."/>
            <person name="Burland V."/>
            <person name="Venkatesan M.M."/>
            <person name="Deng W."/>
            <person name="Fournier G."/>
            <person name="Mayhew G.F."/>
            <person name="Plunkett G. III"/>
            <person name="Rose D.J."/>
            <person name="Darling A."/>
            <person name="Mau B."/>
            <person name="Perna N.T."/>
            <person name="Payne S.M."/>
            <person name="Runyen-Janecky L.J."/>
            <person name="Zhou S."/>
            <person name="Schwartz D.C."/>
            <person name="Blattner F.R."/>
        </authorList>
    </citation>
    <scope>NUCLEOTIDE SEQUENCE [LARGE SCALE GENOMIC DNA]</scope>
    <source>
        <strain>ATCC 700930 / 2457T / Serotype 2a</strain>
    </source>
</reference>
<evidence type="ECO:0000255" key="1">
    <source>
        <dbReference type="HAMAP-Rule" id="MF_00708"/>
    </source>
</evidence>
<sequence length="131" mass="15059">MTTKRKPYVRPMTSTWWKKLPFYRFYMLREGTAVPAVWFSIELIFALFALKNGPEAWAGFVDFLQNPVIVIINLITLTAALLHTKTWFELAPKAANIIVKDEKMGPEPIIKSLWAVTVVATIVILFVALYW</sequence>
<keyword id="KW-0997">Cell inner membrane</keyword>
<keyword id="KW-1003">Cell membrane</keyword>
<keyword id="KW-0472">Membrane</keyword>
<keyword id="KW-1185">Reference proteome</keyword>
<keyword id="KW-0812">Transmembrane</keyword>
<keyword id="KW-1133">Transmembrane helix</keyword>
<name>FRDC_SHIFL</name>
<dbReference type="EMBL" id="AE005674">
    <property type="protein sequence ID" value="AAN45728.1"/>
    <property type="molecule type" value="Genomic_DNA"/>
</dbReference>
<dbReference type="EMBL" id="AE014073">
    <property type="protein sequence ID" value="AAP19512.1"/>
    <property type="molecule type" value="Genomic_DNA"/>
</dbReference>
<dbReference type="RefSeq" id="NP_710021.1">
    <property type="nucleotide sequence ID" value="NC_004337.2"/>
</dbReference>
<dbReference type="RefSeq" id="WP_000208747.1">
    <property type="nucleotide sequence ID" value="NZ_WPGW01000002.1"/>
</dbReference>
<dbReference type="SMR" id="Q83P38"/>
<dbReference type="STRING" id="198214.SF4310"/>
<dbReference type="PaxDb" id="198214-SF4310"/>
<dbReference type="GeneID" id="1026766"/>
<dbReference type="KEGG" id="sfl:SF4310"/>
<dbReference type="KEGG" id="sfx:S4575"/>
<dbReference type="PATRIC" id="fig|198214.7.peg.5081"/>
<dbReference type="HOGENOM" id="CLU_156492_0_0_6"/>
<dbReference type="Proteomes" id="UP000001006">
    <property type="component" value="Chromosome"/>
</dbReference>
<dbReference type="Proteomes" id="UP000002673">
    <property type="component" value="Chromosome"/>
</dbReference>
<dbReference type="GO" id="GO:0045283">
    <property type="term" value="C:fumarate reductase complex"/>
    <property type="evidence" value="ECO:0007669"/>
    <property type="project" value="UniProtKB-UniRule"/>
</dbReference>
<dbReference type="GO" id="GO:0005886">
    <property type="term" value="C:plasma membrane"/>
    <property type="evidence" value="ECO:0007669"/>
    <property type="project" value="UniProtKB-SubCell"/>
</dbReference>
<dbReference type="GO" id="GO:0000104">
    <property type="term" value="F:succinate dehydrogenase activity"/>
    <property type="evidence" value="ECO:0007669"/>
    <property type="project" value="UniProtKB-UniRule"/>
</dbReference>
<dbReference type="CDD" id="cd00546">
    <property type="entry name" value="QFR_TypeD_subunitC"/>
    <property type="match status" value="1"/>
</dbReference>
<dbReference type="FunFam" id="1.20.1300.10:FF:000003">
    <property type="entry name" value="Fumarate reductase subunit C"/>
    <property type="match status" value="1"/>
</dbReference>
<dbReference type="Gene3D" id="1.20.1300.10">
    <property type="entry name" value="Fumarate reductase/succinate dehydrogenase, transmembrane subunit"/>
    <property type="match status" value="1"/>
</dbReference>
<dbReference type="HAMAP" id="MF_00708">
    <property type="entry name" value="Fumarate_red_C"/>
    <property type="match status" value="1"/>
</dbReference>
<dbReference type="InterPro" id="IPR003510">
    <property type="entry name" value="Fumarate_red_C"/>
</dbReference>
<dbReference type="InterPro" id="IPR034804">
    <property type="entry name" value="SQR/QFR_C/D"/>
</dbReference>
<dbReference type="NCBIfam" id="NF003445">
    <property type="entry name" value="PRK04987.1"/>
    <property type="match status" value="1"/>
</dbReference>
<dbReference type="Pfam" id="PF02300">
    <property type="entry name" value="Fumarate_red_C"/>
    <property type="match status" value="1"/>
</dbReference>
<dbReference type="PIRSF" id="PIRSF000180">
    <property type="entry name" value="FrdC"/>
    <property type="match status" value="1"/>
</dbReference>
<dbReference type="SUPFAM" id="SSF81343">
    <property type="entry name" value="Fumarate reductase respiratory complex transmembrane subunits"/>
    <property type="match status" value="1"/>
</dbReference>
<feature type="chain" id="PRO_0000196536" description="Fumarate reductase subunit C">
    <location>
        <begin position="1"/>
        <end position="131"/>
    </location>
</feature>
<feature type="transmembrane region" description="Helical" evidence="1">
    <location>
        <begin position="30"/>
        <end position="50"/>
    </location>
</feature>
<feature type="transmembrane region" description="Helical" evidence="1">
    <location>
        <begin position="57"/>
        <end position="77"/>
    </location>
</feature>
<feature type="transmembrane region" description="Helical" evidence="1">
    <location>
        <begin position="109"/>
        <end position="129"/>
    </location>
</feature>
<proteinExistence type="inferred from homology"/>
<accession>Q83P38</accession>
<comment type="function">
    <text evidence="1">Two distinct, membrane-bound, FAD-containing enzymes are responsible for the catalysis of fumarate and succinate interconversion; fumarate reductase is used in anaerobic growth, and succinate dehydrogenase is used in aerobic growth. Anchors the catalytic components of the fumarate reductase complex to the cell inner membrane, binds quinones.</text>
</comment>
<comment type="subunit">
    <text evidence="1">Part of an enzyme complex containing four subunits: a flavoprotein (FrdA), an iron-sulfur protein (FrdB), and two hydrophobic anchor proteins (FrdC and FrdD).</text>
</comment>
<comment type="subcellular location">
    <subcellularLocation>
        <location evidence="1">Cell inner membrane</location>
        <topology evidence="1">Multi-pass membrane protein</topology>
    </subcellularLocation>
</comment>
<comment type="similarity">
    <text evidence="1">Belongs to the FrdC family.</text>
</comment>
<protein>
    <recommendedName>
        <fullName evidence="1">Fumarate reductase subunit C</fullName>
    </recommendedName>
    <alternativeName>
        <fullName evidence="1">Fumarate reductase 15 kDa hydrophobic protein</fullName>
    </alternativeName>
    <alternativeName>
        <fullName evidence="1">Quinol-fumarate reductase subunit C</fullName>
        <shortName evidence="1">QFR subunit C</shortName>
    </alternativeName>
</protein>